<organism>
    <name type="scientific">Debaryomyces hansenii (strain ATCC 36239 / CBS 767 / BCRC 21394 / JCM 1990 / NBRC 0083 / IGC 2968)</name>
    <name type="common">Yeast</name>
    <name type="synonym">Torulaspora hansenii</name>
    <dbReference type="NCBI Taxonomy" id="284592"/>
    <lineage>
        <taxon>Eukaryota</taxon>
        <taxon>Fungi</taxon>
        <taxon>Dikarya</taxon>
        <taxon>Ascomycota</taxon>
        <taxon>Saccharomycotina</taxon>
        <taxon>Pichiomycetes</taxon>
        <taxon>Debaryomycetaceae</taxon>
        <taxon>Debaryomyces</taxon>
    </lineage>
</organism>
<feature type="chain" id="PRO_0000087534" description="Glucose N-acetyltransferase 1">
    <location>
        <begin position="1"/>
        <end position="464"/>
    </location>
</feature>
<feature type="topological domain" description="Cytoplasmic" evidence="2">
    <location>
        <begin position="1"/>
        <end position="14"/>
    </location>
</feature>
<feature type="transmembrane region" description="Helical; Signal-anchor for type II membrane protein" evidence="2">
    <location>
        <begin position="15"/>
        <end position="35"/>
    </location>
</feature>
<feature type="topological domain" description="Lumenal" evidence="2">
    <location>
        <begin position="36"/>
        <end position="464"/>
    </location>
</feature>
<feature type="short sequence motif" description="DXD">
    <location>
        <begin position="167"/>
        <end position="169"/>
    </location>
</feature>
<feature type="glycosylation site" description="N-linked (GlcNAc...) asparagine" evidence="2">
    <location>
        <position position="180"/>
    </location>
</feature>
<feature type="glycosylation site" description="N-linked (GlcNAc...) asparagine" evidence="2">
    <location>
        <position position="186"/>
    </location>
</feature>
<feature type="glycosylation site" description="N-linked (GlcNAc...) asparagine" evidence="2">
    <location>
        <position position="248"/>
    </location>
</feature>
<feature type="glycosylation site" description="N-linked (GlcNAc...) asparagine" evidence="2">
    <location>
        <position position="310"/>
    </location>
</feature>
<evidence type="ECO:0000250" key="1"/>
<evidence type="ECO:0000255" key="2"/>
<evidence type="ECO:0000305" key="3"/>
<sequence length="464" mass="54445">MKLVLGNGLVNLSWEYMLSFSILLYFIFTQLIFVFEDHSLAKNLKVIPSEVINALFDNFNKNLNFDKYAYVQYATDFDYLNLAIINFIVLRRSSTKIPNLVVLFNRALQEDKNRFDGLRDLSLRYSVTLKPIPIIENVNAESPTWSKSFTKFHIFNEVKYDRIVYFDADSMLLHTQWNDNSSIVNNESNVPENLDELFTIPEIIDIALPQAYWLTKHTKASGKIKAPDGKGYQDEITALINEISKSVNDSLVFEKLPSLLVQSQKSNHRNNFFATHVMVVKPSNEIFNELKKYVHNPWLWSLHKRHALRNKSDYDMEVLNKFIDNVLQENENFKVGILPHKVYGVLTGEFRELSHESFVSEAQFLPFITGELNEQWRPIEIIRNIKLIHFSDSPIPKPWEGMNNFHFYNKFRIYCHDAGFDADLFNSLFPTSWKPRLTTDCDSVNIWNWIMAEYQKLHNELWMV</sequence>
<reference key="1">
    <citation type="journal article" date="2004" name="Nature">
        <title>Genome evolution in yeasts.</title>
        <authorList>
            <person name="Dujon B."/>
            <person name="Sherman D."/>
            <person name="Fischer G."/>
            <person name="Durrens P."/>
            <person name="Casaregola S."/>
            <person name="Lafontaine I."/>
            <person name="de Montigny J."/>
            <person name="Marck C."/>
            <person name="Neuveglise C."/>
            <person name="Talla E."/>
            <person name="Goffard N."/>
            <person name="Frangeul L."/>
            <person name="Aigle M."/>
            <person name="Anthouard V."/>
            <person name="Babour A."/>
            <person name="Barbe V."/>
            <person name="Barnay S."/>
            <person name="Blanchin S."/>
            <person name="Beckerich J.-M."/>
            <person name="Beyne E."/>
            <person name="Bleykasten C."/>
            <person name="Boisrame A."/>
            <person name="Boyer J."/>
            <person name="Cattolico L."/>
            <person name="Confanioleri F."/>
            <person name="de Daruvar A."/>
            <person name="Despons L."/>
            <person name="Fabre E."/>
            <person name="Fairhead C."/>
            <person name="Ferry-Dumazet H."/>
            <person name="Groppi A."/>
            <person name="Hantraye F."/>
            <person name="Hennequin C."/>
            <person name="Jauniaux N."/>
            <person name="Joyet P."/>
            <person name="Kachouri R."/>
            <person name="Kerrest A."/>
            <person name="Koszul R."/>
            <person name="Lemaire M."/>
            <person name="Lesur I."/>
            <person name="Ma L."/>
            <person name="Muller H."/>
            <person name="Nicaud J.-M."/>
            <person name="Nikolski M."/>
            <person name="Oztas S."/>
            <person name="Ozier-Kalogeropoulos O."/>
            <person name="Pellenz S."/>
            <person name="Potier S."/>
            <person name="Richard G.-F."/>
            <person name="Straub M.-L."/>
            <person name="Suleau A."/>
            <person name="Swennen D."/>
            <person name="Tekaia F."/>
            <person name="Wesolowski-Louvel M."/>
            <person name="Westhof E."/>
            <person name="Wirth B."/>
            <person name="Zeniou-Meyer M."/>
            <person name="Zivanovic Y."/>
            <person name="Bolotin-Fukuhara M."/>
            <person name="Thierry A."/>
            <person name="Bouchier C."/>
            <person name="Caudron B."/>
            <person name="Scarpelli C."/>
            <person name="Gaillardin C."/>
            <person name="Weissenbach J."/>
            <person name="Wincker P."/>
            <person name="Souciet J.-L."/>
        </authorList>
    </citation>
    <scope>NUCLEOTIDE SEQUENCE [LARGE SCALE GENOMIC DNA]</scope>
    <source>
        <strain>ATCC 36239 / CBS 767 / BCRC 21394 / JCM 1990 / NBRC 0083 / IGC 2968</strain>
    </source>
</reference>
<protein>
    <recommendedName>
        <fullName>Glucose N-acetyltransferase 1</fullName>
        <ecNumber>2.4.1.-</ecNumber>
    </recommendedName>
    <alternativeName>
        <fullName>N-acetylglucosaminyltransferase</fullName>
    </alternativeName>
</protein>
<proteinExistence type="inferred from homology"/>
<name>GNT1_DEBHA</name>
<accession>Q6BUZ2</accession>
<gene>
    <name type="primary">GNT1</name>
    <name type="ordered locus">DEHA2C06710g</name>
</gene>
<keyword id="KW-0325">Glycoprotein</keyword>
<keyword id="KW-0333">Golgi apparatus</keyword>
<keyword id="KW-0472">Membrane</keyword>
<keyword id="KW-1185">Reference proteome</keyword>
<keyword id="KW-0735">Signal-anchor</keyword>
<keyword id="KW-0808">Transferase</keyword>
<keyword id="KW-0812">Transmembrane</keyword>
<keyword id="KW-1133">Transmembrane helix</keyword>
<keyword id="KW-0926">Vacuole</keyword>
<dbReference type="EC" id="2.4.1.-"/>
<dbReference type="EMBL" id="CR382135">
    <property type="protein sequence ID" value="CAG86035.2"/>
    <property type="molecule type" value="Genomic_DNA"/>
</dbReference>
<dbReference type="RefSeq" id="XP_457977.2">
    <property type="nucleotide sequence ID" value="XM_457977.1"/>
</dbReference>
<dbReference type="FunCoup" id="Q6BUZ2">
    <property type="interactions" value="18"/>
</dbReference>
<dbReference type="STRING" id="284592.Q6BUZ2"/>
<dbReference type="CAZy" id="GT8">
    <property type="family name" value="Glycosyltransferase Family 8"/>
</dbReference>
<dbReference type="GlyCosmos" id="Q6BUZ2">
    <property type="glycosylation" value="4 sites, No reported glycans"/>
</dbReference>
<dbReference type="GeneID" id="2899986"/>
<dbReference type="KEGG" id="dha:DEHA2C06710g"/>
<dbReference type="VEuPathDB" id="FungiDB:DEHA2C06710g"/>
<dbReference type="eggNOG" id="KOG1950">
    <property type="taxonomic scope" value="Eukaryota"/>
</dbReference>
<dbReference type="HOGENOM" id="CLU_034860_1_2_1"/>
<dbReference type="InParanoid" id="Q6BUZ2"/>
<dbReference type="OMA" id="ILPHRVY"/>
<dbReference type="OrthoDB" id="2014201at2759"/>
<dbReference type="Proteomes" id="UP000000599">
    <property type="component" value="Chromosome C"/>
</dbReference>
<dbReference type="GO" id="GO:0000139">
    <property type="term" value="C:Golgi membrane"/>
    <property type="evidence" value="ECO:0007669"/>
    <property type="project" value="UniProtKB-SubCell"/>
</dbReference>
<dbReference type="GO" id="GO:0005774">
    <property type="term" value="C:vacuolar membrane"/>
    <property type="evidence" value="ECO:0007669"/>
    <property type="project" value="UniProtKB-SubCell"/>
</dbReference>
<dbReference type="GO" id="GO:0016740">
    <property type="term" value="F:transferase activity"/>
    <property type="evidence" value="ECO:0007669"/>
    <property type="project" value="UniProtKB-KW"/>
</dbReference>
<dbReference type="CDD" id="cd06914">
    <property type="entry name" value="GT8_GNT1"/>
    <property type="match status" value="1"/>
</dbReference>
<dbReference type="Gene3D" id="3.90.550.10">
    <property type="entry name" value="Spore Coat Polysaccharide Biosynthesis Protein SpsA, Chain A"/>
    <property type="match status" value="1"/>
</dbReference>
<dbReference type="InterPro" id="IPR050587">
    <property type="entry name" value="GNT1/Glycosyltrans_8"/>
</dbReference>
<dbReference type="InterPro" id="IPR029044">
    <property type="entry name" value="Nucleotide-diphossugar_trans"/>
</dbReference>
<dbReference type="PANTHER" id="PTHR11183">
    <property type="entry name" value="GLYCOGENIN SUBFAMILY MEMBER"/>
    <property type="match status" value="1"/>
</dbReference>
<dbReference type="SUPFAM" id="SSF53448">
    <property type="entry name" value="Nucleotide-diphospho-sugar transferases"/>
    <property type="match status" value="1"/>
</dbReference>
<comment type="function">
    <text evidence="1">N-acetylglucosaminyltransferase involved in the Golgi-specific modification of N-linked glycans.</text>
</comment>
<comment type="subcellular location">
    <subcellularLocation>
        <location evidence="1">Golgi apparatus membrane</location>
        <topology evidence="1">Single-pass type II membrane protein</topology>
    </subcellularLocation>
    <subcellularLocation>
        <location evidence="1">Vacuole membrane</location>
        <topology evidence="1">Single-pass type II membrane protein</topology>
    </subcellularLocation>
</comment>
<comment type="similarity">
    <text evidence="3">Belongs to the GNT1 family.</text>
</comment>